<reference key="1">
    <citation type="journal article" date="2004" name="J. Gen. Virol.">
        <title>Genetic content of wild-type human cytomegalovirus.</title>
        <authorList>
            <person name="Dolan A."/>
            <person name="Cunningham C."/>
            <person name="Hector R.D."/>
            <person name="Hassan-Walker A.F."/>
            <person name="Lee L."/>
            <person name="Addison C."/>
            <person name="Dargan D.J."/>
            <person name="McGeoch D.J."/>
            <person name="Gatherer D."/>
            <person name="Emery V.C."/>
            <person name="Griffiths P.D."/>
            <person name="Sinzger C."/>
            <person name="McSharry B.P."/>
            <person name="Wilkinson G.W.G."/>
            <person name="Davison A.J."/>
        </authorList>
    </citation>
    <scope>NUCLEOTIDE SEQUENCE [LARGE SCALE GENOMIC DNA]</scope>
</reference>
<keyword id="KW-0175">Coiled coil</keyword>
<keyword id="KW-1185">Reference proteome</keyword>
<keyword id="KW-0946">Virion</keyword>
<protein>
    <recommendedName>
        <fullName>Protein UL96</fullName>
    </recommendedName>
</protein>
<proteinExistence type="inferred from homology"/>
<comment type="subcellular location">
    <subcellularLocation>
        <location evidence="1">Virion</location>
    </subcellularLocation>
</comment>
<comment type="similarity">
    <text evidence="3">Belongs to the herpesviridae UL96 family.</text>
</comment>
<feature type="chain" id="PRO_0000418319" description="Protein UL96">
    <location>
        <begin position="1"/>
        <end position="127"/>
    </location>
</feature>
<feature type="coiled-coil region" evidence="2">
    <location>
        <begin position="60"/>
        <end position="109"/>
    </location>
</feature>
<organism>
    <name type="scientific">Human cytomegalovirus (strain Merlin)</name>
    <name type="common">HHV-5</name>
    <name type="synonym">Human herpesvirus 5</name>
    <dbReference type="NCBI Taxonomy" id="295027"/>
    <lineage>
        <taxon>Viruses</taxon>
        <taxon>Duplodnaviria</taxon>
        <taxon>Heunggongvirae</taxon>
        <taxon>Peploviricota</taxon>
        <taxon>Herviviricetes</taxon>
        <taxon>Herpesvirales</taxon>
        <taxon>Orthoherpesviridae</taxon>
        <taxon>Betaherpesvirinae</taxon>
        <taxon>Cytomegalovirus</taxon>
        <taxon>Cytomegalovirus humanbeta5</taxon>
        <taxon>Human cytomegalovirus</taxon>
    </lineage>
</organism>
<sequence length="127" mass="14465">MTSVNKQLLKDVMRVDLERQQHQFLRRTYGPQHRLTTQQALTVMRVAAREQTRYSQRTTQCVAAHLLEQRAAVQQELQRARQLQSGNVDDALDSLTELKDTVDDVRATLVDSVSATCDLDLEVDDAV</sequence>
<accession>F5H8R6</accession>
<dbReference type="EMBL" id="AY446894">
    <property type="protein sequence ID" value="AAR31647.1"/>
    <property type="molecule type" value="Genomic_DNA"/>
</dbReference>
<dbReference type="RefSeq" id="YP_081543.1">
    <property type="nucleotide sequence ID" value="NC_006273.2"/>
</dbReference>
<dbReference type="SMR" id="F5H8R6"/>
<dbReference type="DNASU" id="3077498"/>
<dbReference type="GeneID" id="3077498"/>
<dbReference type="KEGG" id="vg:3077498"/>
<dbReference type="Reactome" id="R-HSA-9609690">
    <property type="pathway name" value="HCMV Early Events"/>
</dbReference>
<dbReference type="Reactome" id="R-HSA-9610379">
    <property type="pathway name" value="HCMV Late Events"/>
</dbReference>
<dbReference type="Proteomes" id="UP000000938">
    <property type="component" value="Segment"/>
</dbReference>
<dbReference type="GO" id="GO:0019033">
    <property type="term" value="C:viral tegument"/>
    <property type="evidence" value="ECO:0000304"/>
    <property type="project" value="Reactome"/>
</dbReference>
<dbReference type="InterPro" id="IPR022614">
    <property type="entry name" value="Herpesvirus_UL96"/>
</dbReference>
<dbReference type="Pfam" id="PF10867">
    <property type="entry name" value="DUF2664"/>
    <property type="match status" value="1"/>
</dbReference>
<name>UL96_HCMVM</name>
<evidence type="ECO:0000250" key="1"/>
<evidence type="ECO:0000255" key="2"/>
<evidence type="ECO:0000305" key="3"/>
<organismHost>
    <name type="scientific">Homo sapiens</name>
    <name type="common">Human</name>
    <dbReference type="NCBI Taxonomy" id="9606"/>
</organismHost>
<gene>
    <name type="primary">UL96</name>
</gene>